<sequence>MLMVISPAKTLDFETPPTTGRFTQPQYLDHSQELITQLRELTPAQISELMHLSDKLAGLNAARFGSWNPAFTLDNAKQALLAFKGDVYTGLQAETLSDAQLDYAQDHLRMLSGLYGLLRPLDLMQPYRLEMGTRLANARGKDLYAFWGTQISEWLNEALAAQGDDLLLNLASTEYFSAVKRSALKARIIDTEFKDFKNGQYKIISFYAKKARGMMSRFVIEERINSPEALQAFDVKGYRYNREQSTPDKLVFLRNVVED</sequence>
<gene>
    <name type="ordered locus">PSPPH_1119</name>
</gene>
<protein>
    <recommendedName>
        <fullName evidence="1">UPF0246 protein PSPPH_1119</fullName>
    </recommendedName>
</protein>
<feature type="chain" id="PRO_0000262042" description="UPF0246 protein PSPPH_1119">
    <location>
        <begin position="1"/>
        <end position="259"/>
    </location>
</feature>
<proteinExistence type="inferred from homology"/>
<comment type="similarity">
    <text evidence="1">Belongs to the UPF0246 family.</text>
</comment>
<reference key="1">
    <citation type="journal article" date="2005" name="J. Bacteriol.">
        <title>Whole-genome sequence analysis of Pseudomonas syringae pv. phaseolicola 1448A reveals divergence among pathovars in genes involved in virulence and transposition.</title>
        <authorList>
            <person name="Joardar V."/>
            <person name="Lindeberg M."/>
            <person name="Jackson R.W."/>
            <person name="Selengut J."/>
            <person name="Dodson R."/>
            <person name="Brinkac L.M."/>
            <person name="Daugherty S.C."/>
            <person name="DeBoy R.T."/>
            <person name="Durkin A.S."/>
            <person name="Gwinn Giglio M."/>
            <person name="Madupu R."/>
            <person name="Nelson W.C."/>
            <person name="Rosovitz M.J."/>
            <person name="Sullivan S.A."/>
            <person name="Crabtree J."/>
            <person name="Creasy T."/>
            <person name="Davidsen T.M."/>
            <person name="Haft D.H."/>
            <person name="Zafar N."/>
            <person name="Zhou L."/>
            <person name="Halpin R."/>
            <person name="Holley T."/>
            <person name="Khouri H.M."/>
            <person name="Feldblyum T.V."/>
            <person name="White O."/>
            <person name="Fraser C.M."/>
            <person name="Chatterjee A.K."/>
            <person name="Cartinhour S."/>
            <person name="Schneider D."/>
            <person name="Mansfield J.W."/>
            <person name="Collmer A."/>
            <person name="Buell R."/>
        </authorList>
    </citation>
    <scope>NUCLEOTIDE SEQUENCE [LARGE SCALE GENOMIC DNA]</scope>
    <source>
        <strain>1448A / Race 6</strain>
    </source>
</reference>
<name>Y1119_PSE14</name>
<accession>Q48MI5</accession>
<dbReference type="EMBL" id="CP000058">
    <property type="protein sequence ID" value="AAZ36886.1"/>
    <property type="molecule type" value="Genomic_DNA"/>
</dbReference>
<dbReference type="SMR" id="Q48MI5"/>
<dbReference type="KEGG" id="psp:PSPPH_1119"/>
<dbReference type="eggNOG" id="COG3022">
    <property type="taxonomic scope" value="Bacteria"/>
</dbReference>
<dbReference type="HOGENOM" id="CLU_061989_0_0_6"/>
<dbReference type="Proteomes" id="UP000000551">
    <property type="component" value="Chromosome"/>
</dbReference>
<dbReference type="GO" id="GO:0005829">
    <property type="term" value="C:cytosol"/>
    <property type="evidence" value="ECO:0007669"/>
    <property type="project" value="TreeGrafter"/>
</dbReference>
<dbReference type="GO" id="GO:0033194">
    <property type="term" value="P:response to hydroperoxide"/>
    <property type="evidence" value="ECO:0007669"/>
    <property type="project" value="TreeGrafter"/>
</dbReference>
<dbReference type="HAMAP" id="MF_00652">
    <property type="entry name" value="UPF0246"/>
    <property type="match status" value="1"/>
</dbReference>
<dbReference type="InterPro" id="IPR005583">
    <property type="entry name" value="YaaA"/>
</dbReference>
<dbReference type="NCBIfam" id="NF002541">
    <property type="entry name" value="PRK02101.1-1"/>
    <property type="match status" value="1"/>
</dbReference>
<dbReference type="NCBIfam" id="NF002542">
    <property type="entry name" value="PRK02101.1-3"/>
    <property type="match status" value="1"/>
</dbReference>
<dbReference type="PANTHER" id="PTHR30283:SF4">
    <property type="entry name" value="PEROXIDE STRESS RESISTANCE PROTEIN YAAA"/>
    <property type="match status" value="1"/>
</dbReference>
<dbReference type="PANTHER" id="PTHR30283">
    <property type="entry name" value="PEROXIDE STRESS RESPONSE PROTEIN YAAA"/>
    <property type="match status" value="1"/>
</dbReference>
<dbReference type="Pfam" id="PF03883">
    <property type="entry name" value="H2O2_YaaD"/>
    <property type="match status" value="1"/>
</dbReference>
<evidence type="ECO:0000255" key="1">
    <source>
        <dbReference type="HAMAP-Rule" id="MF_00652"/>
    </source>
</evidence>
<organism>
    <name type="scientific">Pseudomonas savastanoi pv. phaseolicola (strain 1448A / Race 6)</name>
    <name type="common">Pseudomonas syringae pv. phaseolicola (strain 1448A / Race 6)</name>
    <dbReference type="NCBI Taxonomy" id="264730"/>
    <lineage>
        <taxon>Bacteria</taxon>
        <taxon>Pseudomonadati</taxon>
        <taxon>Pseudomonadota</taxon>
        <taxon>Gammaproteobacteria</taxon>
        <taxon>Pseudomonadales</taxon>
        <taxon>Pseudomonadaceae</taxon>
        <taxon>Pseudomonas</taxon>
    </lineage>
</organism>